<comment type="function">
    <text>Neuropeptide with neuronal depressant and sleep-modulating properties.</text>
</comment>
<comment type="subcellular location">
    <subcellularLocation>
        <location>Secreted</location>
    </subcellularLocation>
</comment>
<comment type="tissue specificity">
    <text>Interneurons in the cerebral cortex and hippocampus.</text>
</comment>
<comment type="developmental stage">
    <text>There is a transient increase in cortistatin-expressing cells in the second postnatal week in all cortical areas and in the dentate gyrus. A transient expression is observed in the hilar region at P16.</text>
</comment>
<comment type="similarity">
    <text evidence="4">Belongs to the somatostatin family.</text>
</comment>
<dbReference type="EMBL" id="U51919">
    <property type="protein sequence ID" value="AAC52585.1"/>
    <property type="molecule type" value="mRNA"/>
</dbReference>
<dbReference type="PIR" id="S67489">
    <property type="entry name" value="S67489"/>
</dbReference>
<dbReference type="RefSeq" id="NP_036967.1">
    <property type="nucleotide sequence ID" value="NM_012835.1"/>
</dbReference>
<dbReference type="FunCoup" id="Q62949">
    <property type="interactions" value="10"/>
</dbReference>
<dbReference type="PhosphoSitePlus" id="Q62949"/>
<dbReference type="GeneID" id="25305"/>
<dbReference type="KEGG" id="rno:25305"/>
<dbReference type="UCSC" id="RGD:2383">
    <property type="organism name" value="rat"/>
</dbReference>
<dbReference type="AGR" id="RGD:2383"/>
<dbReference type="CTD" id="1325"/>
<dbReference type="RGD" id="2383">
    <property type="gene designation" value="Cort"/>
</dbReference>
<dbReference type="InParanoid" id="Q62949"/>
<dbReference type="OrthoDB" id="88970at9989"/>
<dbReference type="PhylomeDB" id="Q62949"/>
<dbReference type="PRO" id="PR:Q62949"/>
<dbReference type="Proteomes" id="UP000002494">
    <property type="component" value="Unplaced"/>
</dbReference>
<dbReference type="GO" id="GO:0005615">
    <property type="term" value="C:extracellular space"/>
    <property type="evidence" value="ECO:0000318"/>
    <property type="project" value="GO_Central"/>
</dbReference>
<dbReference type="GO" id="GO:0001664">
    <property type="term" value="F:G protein-coupled receptor binding"/>
    <property type="evidence" value="ECO:0000266"/>
    <property type="project" value="RGD"/>
</dbReference>
<dbReference type="GO" id="GO:0005184">
    <property type="term" value="F:neuropeptide hormone activity"/>
    <property type="evidence" value="ECO:0000314"/>
    <property type="project" value="RGD"/>
</dbReference>
<dbReference type="GO" id="GO:0007193">
    <property type="term" value="P:adenylate cyclase-inhibiting G protein-coupled receptor signaling pathway"/>
    <property type="evidence" value="ECO:0000266"/>
    <property type="project" value="RGD"/>
</dbReference>
<dbReference type="GO" id="GO:0007218">
    <property type="term" value="P:neuropeptide signaling pathway"/>
    <property type="evidence" value="ECO:0000314"/>
    <property type="project" value="RGD"/>
</dbReference>
<dbReference type="GO" id="GO:0030334">
    <property type="term" value="P:regulation of cell migration"/>
    <property type="evidence" value="ECO:0000318"/>
    <property type="project" value="GO_Central"/>
</dbReference>
<dbReference type="GO" id="GO:0045187">
    <property type="term" value="P:regulation of circadian sleep/wake cycle, sleep"/>
    <property type="evidence" value="ECO:0000314"/>
    <property type="project" value="RGD"/>
</dbReference>
<dbReference type="InterPro" id="IPR004250">
    <property type="entry name" value="Somatostatin"/>
</dbReference>
<dbReference type="InterPro" id="IPR018142">
    <property type="entry name" value="Somatostatin/Cortistatin_C"/>
</dbReference>
<dbReference type="PANTHER" id="PTHR10558:SF1">
    <property type="entry name" value="CORTISTATIN"/>
    <property type="match status" value="1"/>
</dbReference>
<dbReference type="PANTHER" id="PTHR10558">
    <property type="entry name" value="SOMATOSTATIN"/>
    <property type="match status" value="1"/>
</dbReference>
<dbReference type="Pfam" id="PF03002">
    <property type="entry name" value="Somatostatin"/>
    <property type="match status" value="1"/>
</dbReference>
<dbReference type="PIRSF" id="PIRSF001814">
    <property type="entry name" value="Somatostatin"/>
    <property type="match status" value="1"/>
</dbReference>
<reference key="1">
    <citation type="journal article" date="1996" name="Nature">
        <title>A cortical neuropeptide with neuronal depressant and sleep-modulating properties.</title>
        <authorList>
            <person name="de Lecea L."/>
            <person name="Criado J.R."/>
            <person name="Prospero-Garcia O."/>
            <person name="Gautvik K.M."/>
            <person name="Schweitzer P."/>
            <person name="Danielson P.E."/>
            <person name="Dunlop C.L.M."/>
            <person name="Siggins G.R."/>
            <person name="Henriksen S.J."/>
            <person name="Sutcliffe J.G."/>
        </authorList>
    </citation>
    <scope>NUCLEOTIDE SEQUENCE [MRNA]</scope>
    <scope>SYNTHESIS OF 99-112</scope>
    <source>
        <strain>Sprague-Dawley</strain>
    </source>
</reference>
<accession>Q62949</accession>
<proteinExistence type="evidence at transcript level"/>
<evidence type="ECO:0000250" key="1"/>
<evidence type="ECO:0000255" key="2"/>
<evidence type="ECO:0000256" key="3">
    <source>
        <dbReference type="SAM" id="MobiDB-lite"/>
    </source>
</evidence>
<evidence type="ECO:0000305" key="4"/>
<protein>
    <recommendedName>
        <fullName>Cortistatin</fullName>
    </recommendedName>
    <component>
        <recommendedName>
            <fullName>Cortistatin-29</fullName>
        </recommendedName>
    </component>
    <component>
        <recommendedName>
            <fullName>Cortistatin-14</fullName>
        </recommendedName>
    </component>
</protein>
<feature type="signal peptide" evidence="2">
    <location>
        <begin position="1"/>
        <end position="27"/>
    </location>
</feature>
<feature type="propeptide" id="PRO_0000033159" evidence="2">
    <location>
        <begin position="28"/>
        <end position="81"/>
    </location>
</feature>
<feature type="peptide" id="PRO_0000033160" description="Cortistatin-29" evidence="2">
    <location>
        <begin position="84"/>
        <end position="112"/>
    </location>
</feature>
<feature type="peptide" id="PRO_0000033161" description="Cortistatin-14">
    <location>
        <begin position="99"/>
        <end position="112"/>
    </location>
</feature>
<feature type="region of interest" description="Disordered" evidence="3">
    <location>
        <begin position="66"/>
        <end position="101"/>
    </location>
</feature>
<feature type="disulfide bond" evidence="1">
    <location>
        <begin position="100"/>
        <end position="111"/>
    </location>
</feature>
<gene>
    <name type="primary">Cort</name>
</gene>
<sequence length="112" mass="12201">MGGCSTRGKRPSALSLLLLLLLSGIAASALPLESGPTGQDSVQDATGGRRTGLLTFLAWWHEWASQDSSSTAFEGGTPELSKRQERPPLQQPPHRDKKPCKNFFWKTFSSCK</sequence>
<organism>
    <name type="scientific">Rattus norvegicus</name>
    <name type="common">Rat</name>
    <dbReference type="NCBI Taxonomy" id="10116"/>
    <lineage>
        <taxon>Eukaryota</taxon>
        <taxon>Metazoa</taxon>
        <taxon>Chordata</taxon>
        <taxon>Craniata</taxon>
        <taxon>Vertebrata</taxon>
        <taxon>Euteleostomi</taxon>
        <taxon>Mammalia</taxon>
        <taxon>Eutheria</taxon>
        <taxon>Euarchontoglires</taxon>
        <taxon>Glires</taxon>
        <taxon>Rodentia</taxon>
        <taxon>Myomorpha</taxon>
        <taxon>Muroidea</taxon>
        <taxon>Muridae</taxon>
        <taxon>Murinae</taxon>
        <taxon>Rattus</taxon>
    </lineage>
</organism>
<keyword id="KW-0165">Cleavage on pair of basic residues</keyword>
<keyword id="KW-1015">Disulfide bond</keyword>
<keyword id="KW-0372">Hormone</keyword>
<keyword id="KW-1185">Reference proteome</keyword>
<keyword id="KW-0964">Secreted</keyword>
<keyword id="KW-0732">Signal</keyword>
<name>CORT_RAT</name>